<protein>
    <recommendedName>
        <fullName evidence="1">3-isopropylmalate dehydratase large subunit</fullName>
        <ecNumber evidence="1">4.2.1.33</ecNumber>
    </recommendedName>
    <alternativeName>
        <fullName evidence="1">Alpha-IPM isomerase</fullName>
        <shortName evidence="1">IPMI</shortName>
    </alternativeName>
    <alternativeName>
        <fullName evidence="1">Isopropylmalate isomerase</fullName>
    </alternativeName>
</protein>
<geneLocation type="plasmid">
    <name>pLeu</name>
    <name>pBAp1</name>
</geneLocation>
<keyword id="KW-0004">4Fe-4S</keyword>
<keyword id="KW-0028">Amino-acid biosynthesis</keyword>
<keyword id="KW-0100">Branched-chain amino acid biosynthesis</keyword>
<keyword id="KW-0408">Iron</keyword>
<keyword id="KW-0411">Iron-sulfur</keyword>
<keyword id="KW-0432">Leucine biosynthesis</keyword>
<keyword id="KW-0456">Lyase</keyword>
<keyword id="KW-0479">Metal-binding</keyword>
<keyword id="KW-0614">Plasmid</keyword>
<organism>
    <name type="scientific">Buchnera aphidicola subsp. Uroleucon solidaginis</name>
    <dbReference type="NCBI Taxonomy" id="118121"/>
    <lineage>
        <taxon>Bacteria</taxon>
        <taxon>Pseudomonadati</taxon>
        <taxon>Pseudomonadota</taxon>
        <taxon>Gammaproteobacteria</taxon>
        <taxon>Enterobacterales</taxon>
        <taxon>Erwiniaceae</taxon>
        <taxon>Buchnera</taxon>
    </lineage>
</organism>
<dbReference type="EC" id="4.2.1.33" evidence="1"/>
<dbReference type="EMBL" id="AF197449">
    <property type="protein sequence ID" value="AAG31382.1"/>
    <property type="molecule type" value="Genomic_DNA"/>
</dbReference>
<dbReference type="UniPathway" id="UPA00048">
    <property type="reaction ID" value="UER00071"/>
</dbReference>
<dbReference type="GO" id="GO:0003861">
    <property type="term" value="F:3-isopropylmalate dehydratase activity"/>
    <property type="evidence" value="ECO:0007669"/>
    <property type="project" value="UniProtKB-EC"/>
</dbReference>
<dbReference type="GO" id="GO:0051539">
    <property type="term" value="F:4 iron, 4 sulfur cluster binding"/>
    <property type="evidence" value="ECO:0007669"/>
    <property type="project" value="UniProtKB-KW"/>
</dbReference>
<dbReference type="GO" id="GO:0046872">
    <property type="term" value="F:metal ion binding"/>
    <property type="evidence" value="ECO:0007669"/>
    <property type="project" value="UniProtKB-KW"/>
</dbReference>
<dbReference type="GO" id="GO:0009098">
    <property type="term" value="P:L-leucine biosynthetic process"/>
    <property type="evidence" value="ECO:0007669"/>
    <property type="project" value="UniProtKB-UniPathway"/>
</dbReference>
<dbReference type="CDD" id="cd01583">
    <property type="entry name" value="IPMI"/>
    <property type="match status" value="1"/>
</dbReference>
<dbReference type="Gene3D" id="3.30.499.10">
    <property type="entry name" value="Aconitase, domain 3"/>
    <property type="match status" value="2"/>
</dbReference>
<dbReference type="HAMAP" id="MF_01026">
    <property type="entry name" value="LeuC_type1"/>
    <property type="match status" value="1"/>
</dbReference>
<dbReference type="InterPro" id="IPR004430">
    <property type="entry name" value="3-IsopropMal_deHydase_lsu"/>
</dbReference>
<dbReference type="InterPro" id="IPR015931">
    <property type="entry name" value="Acnase/IPM_dHydase_lsu_aba_1/3"/>
</dbReference>
<dbReference type="InterPro" id="IPR001030">
    <property type="entry name" value="Acoase/IPM_deHydtase_lsu_aba"/>
</dbReference>
<dbReference type="InterPro" id="IPR018136">
    <property type="entry name" value="Aconitase_4Fe-4S_BS"/>
</dbReference>
<dbReference type="InterPro" id="IPR036008">
    <property type="entry name" value="Aconitase_4Fe-4S_dom"/>
</dbReference>
<dbReference type="InterPro" id="IPR050067">
    <property type="entry name" value="IPM_dehydratase_rel_enz"/>
</dbReference>
<dbReference type="InterPro" id="IPR033941">
    <property type="entry name" value="IPMI_cat"/>
</dbReference>
<dbReference type="NCBIfam" id="TIGR00170">
    <property type="entry name" value="leuC"/>
    <property type="match status" value="1"/>
</dbReference>
<dbReference type="NCBIfam" id="NF004016">
    <property type="entry name" value="PRK05478.1"/>
    <property type="match status" value="1"/>
</dbReference>
<dbReference type="NCBIfam" id="NF009116">
    <property type="entry name" value="PRK12466.1"/>
    <property type="match status" value="1"/>
</dbReference>
<dbReference type="PANTHER" id="PTHR43822:SF9">
    <property type="entry name" value="3-ISOPROPYLMALATE DEHYDRATASE"/>
    <property type="match status" value="1"/>
</dbReference>
<dbReference type="PANTHER" id="PTHR43822">
    <property type="entry name" value="HOMOACONITASE, MITOCHONDRIAL-RELATED"/>
    <property type="match status" value="1"/>
</dbReference>
<dbReference type="Pfam" id="PF00330">
    <property type="entry name" value="Aconitase"/>
    <property type="match status" value="1"/>
</dbReference>
<dbReference type="PRINTS" id="PR00415">
    <property type="entry name" value="ACONITASE"/>
</dbReference>
<dbReference type="SUPFAM" id="SSF53732">
    <property type="entry name" value="Aconitase iron-sulfur domain"/>
    <property type="match status" value="1"/>
</dbReference>
<dbReference type="PROSITE" id="PS00450">
    <property type="entry name" value="ACONITASE_1"/>
    <property type="match status" value="1"/>
</dbReference>
<dbReference type="PROSITE" id="PS01244">
    <property type="entry name" value="ACONITASE_2"/>
    <property type="match status" value="1"/>
</dbReference>
<accession>Q9EVI3</accession>
<reference key="1">
    <citation type="journal article" date="2001" name="J. Bacteriol.">
        <title>Vertical transmission of biosynthetic plasmids in aphid endosymbionts (Buchnera).</title>
        <authorList>
            <person name="Wernegreen J.J."/>
            <person name="Moran N.A."/>
        </authorList>
    </citation>
    <scope>NUCLEOTIDE SEQUENCE [GENOMIC DNA]</scope>
</reference>
<feature type="chain" id="PRO_0000076730" description="3-isopropylmalate dehydratase large subunit">
    <location>
        <begin position="1"/>
        <end position="442" status="greater than"/>
    </location>
</feature>
<feature type="binding site" evidence="1">
    <location>
        <position position="347"/>
    </location>
    <ligand>
        <name>[4Fe-4S] cluster</name>
        <dbReference type="ChEBI" id="CHEBI:49883"/>
    </ligand>
</feature>
<feature type="binding site" evidence="1">
    <location>
        <position position="407"/>
    </location>
    <ligand>
        <name>[4Fe-4S] cluster</name>
        <dbReference type="ChEBI" id="CHEBI:49883"/>
    </ligand>
</feature>
<feature type="binding site" evidence="1">
    <location>
        <position position="410"/>
    </location>
    <ligand>
        <name>[4Fe-4S] cluster</name>
        <dbReference type="ChEBI" id="CHEBI:49883"/>
    </ligand>
</feature>
<feature type="non-terminal residue">
    <location>
        <position position="442"/>
    </location>
</feature>
<comment type="function">
    <text evidence="1">Catalyzes the isomerization between 2-isopropylmalate and 3-isopropylmalate, via the formation of 2-isopropylmaleate.</text>
</comment>
<comment type="catalytic activity">
    <reaction evidence="1">
        <text>(2R,3S)-3-isopropylmalate = (2S)-2-isopropylmalate</text>
        <dbReference type="Rhea" id="RHEA:32287"/>
        <dbReference type="ChEBI" id="CHEBI:1178"/>
        <dbReference type="ChEBI" id="CHEBI:35121"/>
        <dbReference type="EC" id="4.2.1.33"/>
    </reaction>
</comment>
<comment type="cofactor">
    <cofactor evidence="1">
        <name>[4Fe-4S] cluster</name>
        <dbReference type="ChEBI" id="CHEBI:49883"/>
    </cofactor>
    <text evidence="1">Binds 1 [4Fe-4S] cluster per subunit.</text>
</comment>
<comment type="pathway">
    <text evidence="1">Amino-acid biosynthesis; L-leucine biosynthesis; L-leucine from 3-methyl-2-oxobutanoate: step 2/4.</text>
</comment>
<comment type="subunit">
    <text evidence="1">Heterodimer of LeuC and LeuD.</text>
</comment>
<comment type="similarity">
    <text evidence="1">Belongs to the aconitase/IPM isomerase family. LeuC type 1 subfamily.</text>
</comment>
<gene>
    <name evidence="1" type="primary">leuC</name>
</gene>
<sequence>MSKTLYQKIYDSHIVYEDKNSESILYIDLHLLHEVTSPQAFDALRNKQRKVRQSRKTFATMDHNVSTTIQNISASGSMAQKQMEQLIKNCQEFNIPLYDINNPNQGIVHVIAPEKGMTLPGMTIVCGDSHTSTHGAFGALAFGIGTSEVEHVLATQTLKQKRFKNMKIEIIGEIPKFVTAKDIILFIIGKLGSSSGTGYVIEFCGDVIKNMSMEERMTICNMAIEMGAKSGLIAPDEITYKYLKNKIYSPSGLSWEKSLDHWKFLKSDKNAYFDKCVTVDISNLAPQITWGTNPDQVISIDEKIPDYNNINSAIKRESSKSACEYMGLQSNTYLTNISIDRVFIGSCTNARIEDLRSASKILKNKKIAKHVKAIVVPGSKLVKRQAEQEGLDRIFIDAGFEWRLPGCSMCLGMNKDRLHFGGRCASXSNRNFEGRQGRGGRT</sequence>
<evidence type="ECO:0000255" key="1">
    <source>
        <dbReference type="HAMAP-Rule" id="MF_01026"/>
    </source>
</evidence>
<name>LEUC_BUCUS</name>
<proteinExistence type="inferred from homology"/>